<organism>
    <name type="scientific">Homo sapiens</name>
    <name type="common">Human</name>
    <dbReference type="NCBI Taxonomy" id="9606"/>
    <lineage>
        <taxon>Eukaryota</taxon>
        <taxon>Metazoa</taxon>
        <taxon>Chordata</taxon>
        <taxon>Craniata</taxon>
        <taxon>Vertebrata</taxon>
        <taxon>Euteleostomi</taxon>
        <taxon>Mammalia</taxon>
        <taxon>Eutheria</taxon>
        <taxon>Euarchontoglires</taxon>
        <taxon>Primates</taxon>
        <taxon>Haplorrhini</taxon>
        <taxon>Catarrhini</taxon>
        <taxon>Hominidae</taxon>
        <taxon>Homo</taxon>
    </lineage>
</organism>
<proteinExistence type="evidence at protein level"/>
<sequence>MLLGRLTSQLLRAVPWAGGRPPWPVSGVLGSRVCGPLYSTSPAGPGRAASLPRKGAQLELEEMLVPRKMSVSPLESWLTARCFLPRLDTGTAGTVAPPQSYQCPPSQIGEGAEQGDEGVADAPQIQCKNVLKIRRRKMNHHKYRKLVKKTRFLRRKVQEGRLRRKQIKFEKDLRRIWLKAGLKEAPEGWQTPKIYLRGK</sequence>
<protein>
    <recommendedName>
        <fullName evidence="5">Small ribosomal subunit protein mS38</fullName>
    </recommendedName>
    <alternativeName>
        <fullName>28S ribosomal protein S38, mitochondrial</fullName>
        <shortName>MRP-S38</shortName>
    </alternativeName>
    <alternativeName>
        <fullName>Aurora kinase A-interacting protein</fullName>
        <shortName>AURKA-interacting protein</shortName>
    </alternativeName>
</protein>
<reference key="1">
    <citation type="journal article" date="2004" name="Nat. Genet.">
        <title>Complete sequencing and characterization of 21,243 full-length human cDNAs.</title>
        <authorList>
            <person name="Ota T."/>
            <person name="Suzuki Y."/>
            <person name="Nishikawa T."/>
            <person name="Otsuki T."/>
            <person name="Sugiyama T."/>
            <person name="Irie R."/>
            <person name="Wakamatsu A."/>
            <person name="Hayashi K."/>
            <person name="Sato H."/>
            <person name="Nagai K."/>
            <person name="Kimura K."/>
            <person name="Makita H."/>
            <person name="Sekine M."/>
            <person name="Obayashi M."/>
            <person name="Nishi T."/>
            <person name="Shibahara T."/>
            <person name="Tanaka T."/>
            <person name="Ishii S."/>
            <person name="Yamamoto J."/>
            <person name="Saito K."/>
            <person name="Kawai Y."/>
            <person name="Isono Y."/>
            <person name="Nakamura Y."/>
            <person name="Nagahari K."/>
            <person name="Murakami K."/>
            <person name="Yasuda T."/>
            <person name="Iwayanagi T."/>
            <person name="Wagatsuma M."/>
            <person name="Shiratori A."/>
            <person name="Sudo H."/>
            <person name="Hosoiri T."/>
            <person name="Kaku Y."/>
            <person name="Kodaira H."/>
            <person name="Kondo H."/>
            <person name="Sugawara M."/>
            <person name="Takahashi M."/>
            <person name="Kanda K."/>
            <person name="Yokoi T."/>
            <person name="Furuya T."/>
            <person name="Kikkawa E."/>
            <person name="Omura Y."/>
            <person name="Abe K."/>
            <person name="Kamihara K."/>
            <person name="Katsuta N."/>
            <person name="Sato K."/>
            <person name="Tanikawa M."/>
            <person name="Yamazaki M."/>
            <person name="Ninomiya K."/>
            <person name="Ishibashi T."/>
            <person name="Yamashita H."/>
            <person name="Murakawa K."/>
            <person name="Fujimori K."/>
            <person name="Tanai H."/>
            <person name="Kimata M."/>
            <person name="Watanabe M."/>
            <person name="Hiraoka S."/>
            <person name="Chiba Y."/>
            <person name="Ishida S."/>
            <person name="Ono Y."/>
            <person name="Takiguchi S."/>
            <person name="Watanabe S."/>
            <person name="Yosida M."/>
            <person name="Hotuta T."/>
            <person name="Kusano J."/>
            <person name="Kanehori K."/>
            <person name="Takahashi-Fujii A."/>
            <person name="Hara H."/>
            <person name="Tanase T.-O."/>
            <person name="Nomura Y."/>
            <person name="Togiya S."/>
            <person name="Komai F."/>
            <person name="Hara R."/>
            <person name="Takeuchi K."/>
            <person name="Arita M."/>
            <person name="Imose N."/>
            <person name="Musashino K."/>
            <person name="Yuuki H."/>
            <person name="Oshima A."/>
            <person name="Sasaki N."/>
            <person name="Aotsuka S."/>
            <person name="Yoshikawa Y."/>
            <person name="Matsunawa H."/>
            <person name="Ichihara T."/>
            <person name="Shiohata N."/>
            <person name="Sano S."/>
            <person name="Moriya S."/>
            <person name="Momiyama H."/>
            <person name="Satoh N."/>
            <person name="Takami S."/>
            <person name="Terashima Y."/>
            <person name="Suzuki O."/>
            <person name="Nakagawa S."/>
            <person name="Senoh A."/>
            <person name="Mizoguchi H."/>
            <person name="Goto Y."/>
            <person name="Shimizu F."/>
            <person name="Wakebe H."/>
            <person name="Hishigaki H."/>
            <person name="Watanabe T."/>
            <person name="Sugiyama A."/>
            <person name="Takemoto M."/>
            <person name="Kawakami B."/>
            <person name="Yamazaki M."/>
            <person name="Watanabe K."/>
            <person name="Kumagai A."/>
            <person name="Itakura S."/>
            <person name="Fukuzumi Y."/>
            <person name="Fujimori Y."/>
            <person name="Komiyama M."/>
            <person name="Tashiro H."/>
            <person name="Tanigami A."/>
            <person name="Fujiwara T."/>
            <person name="Ono T."/>
            <person name="Yamada K."/>
            <person name="Fujii Y."/>
            <person name="Ozaki K."/>
            <person name="Hirao M."/>
            <person name="Ohmori Y."/>
            <person name="Kawabata A."/>
            <person name="Hikiji T."/>
            <person name="Kobatake N."/>
            <person name="Inagaki H."/>
            <person name="Ikema Y."/>
            <person name="Okamoto S."/>
            <person name="Okitani R."/>
            <person name="Kawakami T."/>
            <person name="Noguchi S."/>
            <person name="Itoh T."/>
            <person name="Shigeta K."/>
            <person name="Senba T."/>
            <person name="Matsumura K."/>
            <person name="Nakajima Y."/>
            <person name="Mizuno T."/>
            <person name="Morinaga M."/>
            <person name="Sasaki M."/>
            <person name="Togashi T."/>
            <person name="Oyama M."/>
            <person name="Hata H."/>
            <person name="Watanabe M."/>
            <person name="Komatsu T."/>
            <person name="Mizushima-Sugano J."/>
            <person name="Satoh T."/>
            <person name="Shirai Y."/>
            <person name="Takahashi Y."/>
            <person name="Nakagawa K."/>
            <person name="Okumura K."/>
            <person name="Nagase T."/>
            <person name="Nomura N."/>
            <person name="Kikuchi H."/>
            <person name="Masuho Y."/>
            <person name="Yamashita R."/>
            <person name="Nakai K."/>
            <person name="Yada T."/>
            <person name="Nakamura Y."/>
            <person name="Ohara O."/>
            <person name="Isogai T."/>
            <person name="Sugano S."/>
        </authorList>
    </citation>
    <scope>NUCLEOTIDE SEQUENCE [LARGE SCALE MRNA]</scope>
</reference>
<reference key="2">
    <citation type="journal article" date="2006" name="Nature">
        <title>The DNA sequence and biological annotation of human chromosome 1.</title>
        <authorList>
            <person name="Gregory S.G."/>
            <person name="Barlow K.F."/>
            <person name="McLay K.E."/>
            <person name="Kaul R."/>
            <person name="Swarbreck D."/>
            <person name="Dunham A."/>
            <person name="Scott C.E."/>
            <person name="Howe K.L."/>
            <person name="Woodfine K."/>
            <person name="Spencer C.C.A."/>
            <person name="Jones M.C."/>
            <person name="Gillson C."/>
            <person name="Searle S."/>
            <person name="Zhou Y."/>
            <person name="Kokocinski F."/>
            <person name="McDonald L."/>
            <person name="Evans R."/>
            <person name="Phillips K."/>
            <person name="Atkinson A."/>
            <person name="Cooper R."/>
            <person name="Jones C."/>
            <person name="Hall R.E."/>
            <person name="Andrews T.D."/>
            <person name="Lloyd C."/>
            <person name="Ainscough R."/>
            <person name="Almeida J.P."/>
            <person name="Ambrose K.D."/>
            <person name="Anderson F."/>
            <person name="Andrew R.W."/>
            <person name="Ashwell R.I.S."/>
            <person name="Aubin K."/>
            <person name="Babbage A.K."/>
            <person name="Bagguley C.L."/>
            <person name="Bailey J."/>
            <person name="Beasley H."/>
            <person name="Bethel G."/>
            <person name="Bird C.P."/>
            <person name="Bray-Allen S."/>
            <person name="Brown J.Y."/>
            <person name="Brown A.J."/>
            <person name="Buckley D."/>
            <person name="Burton J."/>
            <person name="Bye J."/>
            <person name="Carder C."/>
            <person name="Chapman J.C."/>
            <person name="Clark S.Y."/>
            <person name="Clarke G."/>
            <person name="Clee C."/>
            <person name="Cobley V."/>
            <person name="Collier R.E."/>
            <person name="Corby N."/>
            <person name="Coville G.J."/>
            <person name="Davies J."/>
            <person name="Deadman R."/>
            <person name="Dunn M."/>
            <person name="Earthrowl M."/>
            <person name="Ellington A.G."/>
            <person name="Errington H."/>
            <person name="Frankish A."/>
            <person name="Frankland J."/>
            <person name="French L."/>
            <person name="Garner P."/>
            <person name="Garnett J."/>
            <person name="Gay L."/>
            <person name="Ghori M.R.J."/>
            <person name="Gibson R."/>
            <person name="Gilby L.M."/>
            <person name="Gillett W."/>
            <person name="Glithero R.J."/>
            <person name="Grafham D.V."/>
            <person name="Griffiths C."/>
            <person name="Griffiths-Jones S."/>
            <person name="Grocock R."/>
            <person name="Hammond S."/>
            <person name="Harrison E.S.I."/>
            <person name="Hart E."/>
            <person name="Haugen E."/>
            <person name="Heath P.D."/>
            <person name="Holmes S."/>
            <person name="Holt K."/>
            <person name="Howden P.J."/>
            <person name="Hunt A.R."/>
            <person name="Hunt S.E."/>
            <person name="Hunter G."/>
            <person name="Isherwood J."/>
            <person name="James R."/>
            <person name="Johnson C."/>
            <person name="Johnson D."/>
            <person name="Joy A."/>
            <person name="Kay M."/>
            <person name="Kershaw J.K."/>
            <person name="Kibukawa M."/>
            <person name="Kimberley A.M."/>
            <person name="King A."/>
            <person name="Knights A.J."/>
            <person name="Lad H."/>
            <person name="Laird G."/>
            <person name="Lawlor S."/>
            <person name="Leongamornlert D.A."/>
            <person name="Lloyd D.M."/>
            <person name="Loveland J."/>
            <person name="Lovell J."/>
            <person name="Lush M.J."/>
            <person name="Lyne R."/>
            <person name="Martin S."/>
            <person name="Mashreghi-Mohammadi M."/>
            <person name="Matthews L."/>
            <person name="Matthews N.S.W."/>
            <person name="McLaren S."/>
            <person name="Milne S."/>
            <person name="Mistry S."/>
            <person name="Moore M.J.F."/>
            <person name="Nickerson T."/>
            <person name="O'Dell C.N."/>
            <person name="Oliver K."/>
            <person name="Palmeiri A."/>
            <person name="Palmer S.A."/>
            <person name="Parker A."/>
            <person name="Patel D."/>
            <person name="Pearce A.V."/>
            <person name="Peck A.I."/>
            <person name="Pelan S."/>
            <person name="Phelps K."/>
            <person name="Phillimore B.J."/>
            <person name="Plumb R."/>
            <person name="Rajan J."/>
            <person name="Raymond C."/>
            <person name="Rouse G."/>
            <person name="Saenphimmachak C."/>
            <person name="Sehra H.K."/>
            <person name="Sheridan E."/>
            <person name="Shownkeen R."/>
            <person name="Sims S."/>
            <person name="Skuce C.D."/>
            <person name="Smith M."/>
            <person name="Steward C."/>
            <person name="Subramanian S."/>
            <person name="Sycamore N."/>
            <person name="Tracey A."/>
            <person name="Tromans A."/>
            <person name="Van Helmond Z."/>
            <person name="Wall M."/>
            <person name="Wallis J.M."/>
            <person name="White S."/>
            <person name="Whitehead S.L."/>
            <person name="Wilkinson J.E."/>
            <person name="Willey D.L."/>
            <person name="Williams H."/>
            <person name="Wilming L."/>
            <person name="Wray P.W."/>
            <person name="Wu Z."/>
            <person name="Coulson A."/>
            <person name="Vaudin M."/>
            <person name="Sulston J.E."/>
            <person name="Durbin R.M."/>
            <person name="Hubbard T."/>
            <person name="Wooster R."/>
            <person name="Dunham I."/>
            <person name="Carter N.P."/>
            <person name="McVean G."/>
            <person name="Ross M.T."/>
            <person name="Harrow J."/>
            <person name="Olson M.V."/>
            <person name="Beck S."/>
            <person name="Rogers J."/>
            <person name="Bentley D.R."/>
        </authorList>
    </citation>
    <scope>NUCLEOTIDE SEQUENCE [LARGE SCALE GENOMIC DNA]</scope>
</reference>
<reference key="3">
    <citation type="journal article" date="2004" name="Genome Res.">
        <title>The status, quality, and expansion of the NIH full-length cDNA project: the Mammalian Gene Collection (MGC).</title>
        <authorList>
            <consortium name="The MGC Project Team"/>
        </authorList>
    </citation>
    <scope>NUCLEOTIDE SEQUENCE [LARGE SCALE MRNA]</scope>
    <source>
        <tissue>Pancreas</tissue>
        <tissue>Prostate</tissue>
    </source>
</reference>
<reference key="4">
    <citation type="journal article" date="2002" name="J. Biol. Chem.">
        <title>Aurora-A kinase interacting protein (AIP), a novel negative regulator of human Aurora-A kinase.</title>
        <authorList>
            <person name="Kiat L.S."/>
            <person name="Hui K.M."/>
            <person name="Gopalan G."/>
        </authorList>
    </citation>
    <scope>INTERACTION WITH AURORA-A</scope>
</reference>
<reference key="5">
    <citation type="journal article" date="2013" name="Front. Physiol.">
        <title>Identification and characterization of CHCHD1, AURKAIP1, and CRIF1 as new members of the mammalian mitochondrial ribosome.</title>
        <authorList>
            <person name="Koc E.C."/>
            <person name="Cimen H."/>
            <person name="Kumcuoglu B."/>
            <person name="Abu N."/>
            <person name="Akpinar G."/>
            <person name="Haque M.E."/>
            <person name="Spremulli L.L."/>
            <person name="Koc H."/>
        </authorList>
    </citation>
    <scope>SUBUNIT</scope>
    <scope>SUBCELLULAR LOCATION</scope>
</reference>
<reference key="6">
    <citation type="journal article" date="2016" name="Cell Rep.">
        <title>APEX Fingerprinting Reveals the Subcellular Localization of Proteins of Interest.</title>
        <authorList>
            <person name="Lee S.Y."/>
            <person name="Kang M.G."/>
            <person name="Park J.S."/>
            <person name="Lee G."/>
            <person name="Ting A.Y."/>
            <person name="Rhee H.W."/>
        </authorList>
    </citation>
    <scope>SUBCELLULAR LOCATION</scope>
</reference>
<reference key="7">
    <citation type="journal article" date="2015" name="Science">
        <title>Ribosome. The structure of the human mitochondrial ribosome.</title>
        <authorList>
            <person name="Amunts A."/>
            <person name="Brown A."/>
            <person name="Toots J."/>
            <person name="Scheres S.H."/>
            <person name="Ramakrishnan V."/>
        </authorList>
    </citation>
    <scope>STRUCTURE BY ELECTRON MICROSCOPY (3.50 ANGSTROMS)</scope>
    <scope>SUBUNIT</scope>
</reference>
<gene>
    <name type="primary">AURKAIP1</name>
    <name type="synonym">AIP</name>
    <name type="synonym">AKIP</name>
    <name type="synonym">MRPS38</name>
</gene>
<dbReference type="EMBL" id="AK000615">
    <property type="protein sequence ID" value="BAA91289.1"/>
    <property type="molecule type" value="mRNA"/>
</dbReference>
<dbReference type="EMBL" id="AL139287">
    <property type="status" value="NOT_ANNOTATED_CDS"/>
    <property type="molecule type" value="Genomic_DNA"/>
</dbReference>
<dbReference type="EMBL" id="BC022808">
    <property type="protein sequence ID" value="AAH22808.1"/>
    <property type="status" value="ALT_INIT"/>
    <property type="molecule type" value="mRNA"/>
</dbReference>
<dbReference type="EMBL" id="BC062333">
    <property type="protein sequence ID" value="AAH62333.1"/>
    <property type="molecule type" value="mRNA"/>
</dbReference>
<dbReference type="CCDS" id="CCDS25.1"/>
<dbReference type="RefSeq" id="NP_001120701.1">
    <property type="nucleotide sequence ID" value="NM_001127229.2"/>
</dbReference>
<dbReference type="RefSeq" id="NP_001120702.1">
    <property type="nucleotide sequence ID" value="NM_001127230.2"/>
</dbReference>
<dbReference type="RefSeq" id="NP_060370.1">
    <property type="nucleotide sequence ID" value="NM_017900.3"/>
</dbReference>
<dbReference type="PDB" id="3J9M">
    <property type="method" value="EM"/>
    <property type="resolution" value="3.50 A"/>
    <property type="chains" value="A3=1-199"/>
</dbReference>
<dbReference type="PDB" id="6NU2">
    <property type="method" value="EM"/>
    <property type="resolution" value="3.90 A"/>
    <property type="chains" value="A3=128-196"/>
</dbReference>
<dbReference type="PDB" id="6NU3">
    <property type="method" value="EM"/>
    <property type="resolution" value="4.40 A"/>
    <property type="chains" value="A3=1-199"/>
</dbReference>
<dbReference type="PDB" id="6RW4">
    <property type="method" value="EM"/>
    <property type="resolution" value="2.97 A"/>
    <property type="chains" value="3=1-199"/>
</dbReference>
<dbReference type="PDB" id="6RW5">
    <property type="method" value="EM"/>
    <property type="resolution" value="3.14 A"/>
    <property type="chains" value="3=1-199"/>
</dbReference>
<dbReference type="PDB" id="6VLZ">
    <property type="method" value="EM"/>
    <property type="resolution" value="2.97 A"/>
    <property type="chains" value="A3=1-199"/>
</dbReference>
<dbReference type="PDB" id="6VMI">
    <property type="method" value="EM"/>
    <property type="resolution" value="2.96 A"/>
    <property type="chains" value="A3=1-199"/>
</dbReference>
<dbReference type="PDB" id="6ZM5">
    <property type="method" value="EM"/>
    <property type="resolution" value="2.89 A"/>
    <property type="chains" value="A3=1-199"/>
</dbReference>
<dbReference type="PDB" id="6ZM6">
    <property type="method" value="EM"/>
    <property type="resolution" value="2.59 A"/>
    <property type="chains" value="A3=1-199"/>
</dbReference>
<dbReference type="PDB" id="6ZS9">
    <property type="method" value="EM"/>
    <property type="resolution" value="4.00 A"/>
    <property type="chains" value="A3=1-199"/>
</dbReference>
<dbReference type="PDB" id="6ZSA">
    <property type="method" value="EM"/>
    <property type="resolution" value="4.00 A"/>
    <property type="chains" value="A3=1-199"/>
</dbReference>
<dbReference type="PDB" id="6ZSB">
    <property type="method" value="EM"/>
    <property type="resolution" value="4.50 A"/>
    <property type="chains" value="A3=1-199"/>
</dbReference>
<dbReference type="PDB" id="6ZSC">
    <property type="method" value="EM"/>
    <property type="resolution" value="3.50 A"/>
    <property type="chains" value="A3=1-199"/>
</dbReference>
<dbReference type="PDB" id="6ZSD">
    <property type="method" value="EM"/>
    <property type="resolution" value="3.70 A"/>
    <property type="chains" value="A3=1-199"/>
</dbReference>
<dbReference type="PDB" id="6ZSE">
    <property type="method" value="EM"/>
    <property type="resolution" value="5.00 A"/>
    <property type="chains" value="A3=1-199"/>
</dbReference>
<dbReference type="PDB" id="6ZSG">
    <property type="method" value="EM"/>
    <property type="resolution" value="4.00 A"/>
    <property type="chains" value="A3=1-199"/>
</dbReference>
<dbReference type="PDB" id="7A5F">
    <property type="method" value="EM"/>
    <property type="resolution" value="4.40 A"/>
    <property type="chains" value="d6=1-199"/>
</dbReference>
<dbReference type="PDB" id="7A5G">
    <property type="method" value="EM"/>
    <property type="resolution" value="4.33 A"/>
    <property type="chains" value="d6=1-199"/>
</dbReference>
<dbReference type="PDB" id="7A5I">
    <property type="method" value="EM"/>
    <property type="resolution" value="3.70 A"/>
    <property type="chains" value="d6=1-199"/>
</dbReference>
<dbReference type="PDB" id="7A5K">
    <property type="method" value="EM"/>
    <property type="resolution" value="3.70 A"/>
    <property type="chains" value="d6=1-199"/>
</dbReference>
<dbReference type="PDB" id="7L08">
    <property type="method" value="EM"/>
    <property type="resolution" value="3.49 A"/>
    <property type="chains" value="A3=1-199"/>
</dbReference>
<dbReference type="PDB" id="7OG4">
    <property type="method" value="EM"/>
    <property type="resolution" value="3.80 A"/>
    <property type="chains" value="A3=1-199"/>
</dbReference>
<dbReference type="PDB" id="7P2E">
    <property type="method" value="EM"/>
    <property type="resolution" value="2.40 A"/>
    <property type="chains" value="3=1-199"/>
</dbReference>
<dbReference type="PDB" id="7PNX">
    <property type="method" value="EM"/>
    <property type="resolution" value="2.76 A"/>
    <property type="chains" value="3=1-199"/>
</dbReference>
<dbReference type="PDB" id="7PNY">
    <property type="method" value="EM"/>
    <property type="resolution" value="3.06 A"/>
    <property type="chains" value="3=1-199"/>
</dbReference>
<dbReference type="PDB" id="7PNZ">
    <property type="method" value="EM"/>
    <property type="resolution" value="3.09 A"/>
    <property type="chains" value="3=1-199"/>
</dbReference>
<dbReference type="PDB" id="7PO0">
    <property type="method" value="EM"/>
    <property type="resolution" value="2.90 A"/>
    <property type="chains" value="3=1-199"/>
</dbReference>
<dbReference type="PDB" id="7PO1">
    <property type="method" value="EM"/>
    <property type="resolution" value="2.92 A"/>
    <property type="chains" value="3=1-199"/>
</dbReference>
<dbReference type="PDB" id="7PO2">
    <property type="method" value="EM"/>
    <property type="resolution" value="3.09 A"/>
    <property type="chains" value="3=1-199"/>
</dbReference>
<dbReference type="PDB" id="7PO3">
    <property type="method" value="EM"/>
    <property type="resolution" value="2.92 A"/>
    <property type="chains" value="3=1-199"/>
</dbReference>
<dbReference type="PDB" id="7QI4">
    <property type="method" value="EM"/>
    <property type="resolution" value="2.21 A"/>
    <property type="chains" value="A3=1-199"/>
</dbReference>
<dbReference type="PDB" id="7QI5">
    <property type="method" value="EM"/>
    <property type="resolution" value="2.63 A"/>
    <property type="chains" value="A3=1-199"/>
</dbReference>
<dbReference type="PDB" id="7QI6">
    <property type="method" value="EM"/>
    <property type="resolution" value="2.98 A"/>
    <property type="chains" value="A3=1-199"/>
</dbReference>
<dbReference type="PDB" id="8ANY">
    <property type="method" value="EM"/>
    <property type="resolution" value="2.85 A"/>
    <property type="chains" value="A3=1-199"/>
</dbReference>
<dbReference type="PDB" id="8CSQ">
    <property type="method" value="EM"/>
    <property type="resolution" value="2.54 A"/>
    <property type="chains" value="3=1-199"/>
</dbReference>
<dbReference type="PDB" id="8CSR">
    <property type="method" value="EM"/>
    <property type="resolution" value="2.54 A"/>
    <property type="chains" value="3=1-199"/>
</dbReference>
<dbReference type="PDB" id="8CSS">
    <property type="method" value="EM"/>
    <property type="resolution" value="2.36 A"/>
    <property type="chains" value="3=1-199"/>
</dbReference>
<dbReference type="PDB" id="8CST">
    <property type="method" value="EM"/>
    <property type="resolution" value="2.85 A"/>
    <property type="chains" value="3=1-199"/>
</dbReference>
<dbReference type="PDB" id="8CSU">
    <property type="method" value="EM"/>
    <property type="resolution" value="3.03 A"/>
    <property type="chains" value="3=1-199"/>
</dbReference>
<dbReference type="PDB" id="8K2A">
    <property type="method" value="EM"/>
    <property type="resolution" value="2.90 A"/>
    <property type="chains" value="Sn=1-199"/>
</dbReference>
<dbReference type="PDB" id="8OIR">
    <property type="method" value="EM"/>
    <property type="resolution" value="3.10 A"/>
    <property type="chains" value="AD=1-199"/>
</dbReference>
<dbReference type="PDB" id="8OIS">
    <property type="method" value="EM"/>
    <property type="resolution" value="3.00 A"/>
    <property type="chains" value="AD=1-199"/>
</dbReference>
<dbReference type="PDB" id="8QRK">
    <property type="method" value="EM"/>
    <property type="resolution" value="6.69 A"/>
    <property type="chains" value="3=1-199"/>
</dbReference>
<dbReference type="PDB" id="8QRL">
    <property type="method" value="EM"/>
    <property type="resolution" value="3.34 A"/>
    <property type="chains" value="3=1-199"/>
</dbReference>
<dbReference type="PDB" id="8QRM">
    <property type="method" value="EM"/>
    <property type="resolution" value="3.05 A"/>
    <property type="chains" value="3=1-199"/>
</dbReference>
<dbReference type="PDB" id="8QRN">
    <property type="method" value="EM"/>
    <property type="resolution" value="2.98 A"/>
    <property type="chains" value="3=1-199"/>
</dbReference>
<dbReference type="PDB" id="8RRI">
    <property type="method" value="EM"/>
    <property type="resolution" value="2.40 A"/>
    <property type="chains" value="A3=1-199"/>
</dbReference>
<dbReference type="PDB" id="8XT0">
    <property type="method" value="EM"/>
    <property type="resolution" value="3.20 A"/>
    <property type="chains" value="Sn=1-199"/>
</dbReference>
<dbReference type="PDB" id="8XT2">
    <property type="method" value="EM"/>
    <property type="resolution" value="3.30 A"/>
    <property type="chains" value="Sn=1-199"/>
</dbReference>
<dbReference type="PDBsum" id="3J9M"/>
<dbReference type="PDBsum" id="6NU2"/>
<dbReference type="PDBsum" id="6NU3"/>
<dbReference type="PDBsum" id="6RW4"/>
<dbReference type="PDBsum" id="6RW5"/>
<dbReference type="PDBsum" id="6VLZ"/>
<dbReference type="PDBsum" id="6VMI"/>
<dbReference type="PDBsum" id="6ZM5"/>
<dbReference type="PDBsum" id="6ZM6"/>
<dbReference type="PDBsum" id="6ZS9"/>
<dbReference type="PDBsum" id="6ZSA"/>
<dbReference type="PDBsum" id="6ZSB"/>
<dbReference type="PDBsum" id="6ZSC"/>
<dbReference type="PDBsum" id="6ZSD"/>
<dbReference type="PDBsum" id="6ZSE"/>
<dbReference type="PDBsum" id="6ZSG"/>
<dbReference type="PDBsum" id="7A5F"/>
<dbReference type="PDBsum" id="7A5G"/>
<dbReference type="PDBsum" id="7A5I"/>
<dbReference type="PDBsum" id="7A5K"/>
<dbReference type="PDBsum" id="7L08"/>
<dbReference type="PDBsum" id="7OG4"/>
<dbReference type="PDBsum" id="7P2E"/>
<dbReference type="PDBsum" id="7PNX"/>
<dbReference type="PDBsum" id="7PNY"/>
<dbReference type="PDBsum" id="7PNZ"/>
<dbReference type="PDBsum" id="7PO0"/>
<dbReference type="PDBsum" id="7PO1"/>
<dbReference type="PDBsum" id="7PO2"/>
<dbReference type="PDBsum" id="7PO3"/>
<dbReference type="PDBsum" id="7QI4"/>
<dbReference type="PDBsum" id="7QI5"/>
<dbReference type="PDBsum" id="7QI6"/>
<dbReference type="PDBsum" id="8ANY"/>
<dbReference type="PDBsum" id="8CSQ"/>
<dbReference type="PDBsum" id="8CSR"/>
<dbReference type="PDBsum" id="8CSS"/>
<dbReference type="PDBsum" id="8CST"/>
<dbReference type="PDBsum" id="8CSU"/>
<dbReference type="PDBsum" id="8K2A"/>
<dbReference type="PDBsum" id="8OIR"/>
<dbReference type="PDBsum" id="8OIS"/>
<dbReference type="PDBsum" id="8QRK"/>
<dbReference type="PDBsum" id="8QRL"/>
<dbReference type="PDBsum" id="8QRM"/>
<dbReference type="PDBsum" id="8QRN"/>
<dbReference type="PDBsum" id="8RRI"/>
<dbReference type="PDBsum" id="8XT0"/>
<dbReference type="PDBsum" id="8XT2"/>
<dbReference type="EMDB" id="EMD-0514"/>
<dbReference type="EMDB" id="EMD-0515"/>
<dbReference type="EMDB" id="EMD-10021"/>
<dbReference type="EMDB" id="EMD-10022"/>
<dbReference type="EMDB" id="EMD-11278"/>
<dbReference type="EMDB" id="EMD-11279"/>
<dbReference type="EMDB" id="EMD-11390"/>
<dbReference type="EMDB" id="EMD-11391"/>
<dbReference type="EMDB" id="EMD-11392"/>
<dbReference type="EMDB" id="EMD-11393"/>
<dbReference type="EMDB" id="EMD-11394"/>
<dbReference type="EMDB" id="EMD-11395"/>
<dbReference type="EMDB" id="EMD-11397"/>
<dbReference type="EMDB" id="EMD-11641"/>
<dbReference type="EMDB" id="EMD-11642"/>
<dbReference type="EMDB" id="EMD-11644"/>
<dbReference type="EMDB" id="EMD-11646"/>
<dbReference type="EMDB" id="EMD-12877"/>
<dbReference type="EMDB" id="EMD-13170"/>
<dbReference type="EMDB" id="EMD-13555"/>
<dbReference type="EMDB" id="EMD-13556"/>
<dbReference type="EMDB" id="EMD-13557"/>
<dbReference type="EMDB" id="EMD-13558"/>
<dbReference type="EMDB" id="EMD-13559"/>
<dbReference type="EMDB" id="EMD-13560"/>
<dbReference type="EMDB" id="EMD-13561"/>
<dbReference type="EMDB" id="EMD-13980"/>
<dbReference type="EMDB" id="EMD-13981"/>
<dbReference type="EMDB" id="EMD-13982"/>
<dbReference type="EMDB" id="EMD-15544"/>
<dbReference type="EMDB" id="EMD-16897"/>
<dbReference type="EMDB" id="EMD-16898"/>
<dbReference type="EMDB" id="EMD-19460"/>
<dbReference type="EMDB" id="EMD-21233"/>
<dbReference type="EMDB" id="EMD-21242"/>
<dbReference type="EMDB" id="EMD-23096"/>
<dbReference type="EMDB" id="EMD-26967"/>
<dbReference type="EMDB" id="EMD-26968"/>
<dbReference type="EMDB" id="EMD-26969"/>
<dbReference type="EMDB" id="EMD-26970"/>
<dbReference type="EMDB" id="EMD-26971"/>
<dbReference type="EMDB" id="EMD-36836"/>
<dbReference type="EMDB" id="EMD-38632"/>
<dbReference type="EMDB" id="EMD-38634"/>
<dbReference type="SMR" id="Q9NWT8"/>
<dbReference type="BioGRID" id="120331">
    <property type="interactions" value="289"/>
</dbReference>
<dbReference type="ComplexPortal" id="CPX-5225">
    <property type="entry name" value="28S mitochondrial small ribosomal subunit"/>
</dbReference>
<dbReference type="FunCoup" id="Q9NWT8">
    <property type="interactions" value="1374"/>
</dbReference>
<dbReference type="IntAct" id="Q9NWT8">
    <property type="interactions" value="290"/>
</dbReference>
<dbReference type="STRING" id="9606.ENSP00000342676"/>
<dbReference type="BindingDB" id="Q9NWT8"/>
<dbReference type="ChEMBL" id="CHEMBL5910"/>
<dbReference type="GlyGen" id="Q9NWT8">
    <property type="glycosylation" value="1 site, 1 O-linked glycan (1 site)"/>
</dbReference>
<dbReference type="iPTMnet" id="Q9NWT8"/>
<dbReference type="PhosphoSitePlus" id="Q9NWT8"/>
<dbReference type="BioMuta" id="AURKAIP1"/>
<dbReference type="DMDM" id="30912743"/>
<dbReference type="jPOST" id="Q9NWT8"/>
<dbReference type="MassIVE" id="Q9NWT8"/>
<dbReference type="PaxDb" id="9606-ENSP00000342676"/>
<dbReference type="PeptideAtlas" id="Q9NWT8"/>
<dbReference type="ProteomicsDB" id="82979"/>
<dbReference type="Pumba" id="Q9NWT8"/>
<dbReference type="TopDownProteomics" id="Q9NWT8"/>
<dbReference type="Antibodypedia" id="26311">
    <property type="antibodies" value="72 antibodies from 20 providers"/>
</dbReference>
<dbReference type="DNASU" id="54998"/>
<dbReference type="Ensembl" id="ENST00000321751.9">
    <property type="protein sequence ID" value="ENSP00000319778.5"/>
    <property type="gene ID" value="ENSG00000175756.14"/>
</dbReference>
<dbReference type="Ensembl" id="ENST00000338338.10">
    <property type="protein sequence ID" value="ENSP00000340656.5"/>
    <property type="gene ID" value="ENSG00000175756.14"/>
</dbReference>
<dbReference type="Ensembl" id="ENST00000338370.7">
    <property type="protein sequence ID" value="ENSP00000342676.3"/>
    <property type="gene ID" value="ENSG00000175756.14"/>
</dbReference>
<dbReference type="Ensembl" id="ENST00000378853.3">
    <property type="protein sequence ID" value="ENSP00000368130.3"/>
    <property type="gene ID" value="ENSG00000175756.14"/>
</dbReference>
<dbReference type="GeneID" id="54998"/>
<dbReference type="KEGG" id="hsa:54998"/>
<dbReference type="MANE-Select" id="ENST00000338338.10">
    <property type="protein sequence ID" value="ENSP00000340656.5"/>
    <property type="RefSeq nucleotide sequence ID" value="NM_017900.3"/>
    <property type="RefSeq protein sequence ID" value="NP_060370.1"/>
</dbReference>
<dbReference type="UCSC" id="uc001afb.2">
    <property type="organism name" value="human"/>
</dbReference>
<dbReference type="AGR" id="HGNC:24114"/>
<dbReference type="CTD" id="54998"/>
<dbReference type="DisGeNET" id="54998"/>
<dbReference type="GeneCards" id="AURKAIP1"/>
<dbReference type="HGNC" id="HGNC:24114">
    <property type="gene designation" value="AURKAIP1"/>
</dbReference>
<dbReference type="HPA" id="ENSG00000175756">
    <property type="expression patterns" value="Low tissue specificity"/>
</dbReference>
<dbReference type="MIM" id="609183">
    <property type="type" value="gene"/>
</dbReference>
<dbReference type="neXtProt" id="NX_Q9NWT8"/>
<dbReference type="OpenTargets" id="ENSG00000175756"/>
<dbReference type="PharmGKB" id="PA142672568"/>
<dbReference type="VEuPathDB" id="HostDB:ENSG00000175756"/>
<dbReference type="eggNOG" id="ENOG502S2YD">
    <property type="taxonomic scope" value="Eukaryota"/>
</dbReference>
<dbReference type="GeneTree" id="ENSGT00390000012802"/>
<dbReference type="HOGENOM" id="CLU_112940_1_0_1"/>
<dbReference type="InParanoid" id="Q9NWT8"/>
<dbReference type="OMA" id="GWTTPKI"/>
<dbReference type="OrthoDB" id="6139741at2759"/>
<dbReference type="PAN-GO" id="Q9NWT8">
    <property type="GO annotations" value="2 GO annotations based on evolutionary models"/>
</dbReference>
<dbReference type="PhylomeDB" id="Q9NWT8"/>
<dbReference type="TreeFam" id="TF332330"/>
<dbReference type="PathwayCommons" id="Q9NWT8"/>
<dbReference type="Reactome" id="R-HSA-5368286">
    <property type="pathway name" value="Mitochondrial translation initiation"/>
</dbReference>
<dbReference type="Reactome" id="R-HSA-5389840">
    <property type="pathway name" value="Mitochondrial translation elongation"/>
</dbReference>
<dbReference type="Reactome" id="R-HSA-5419276">
    <property type="pathway name" value="Mitochondrial translation termination"/>
</dbReference>
<dbReference type="SignaLink" id="Q9NWT8"/>
<dbReference type="SIGNOR" id="Q9NWT8"/>
<dbReference type="BioGRID-ORCS" id="54998">
    <property type="hits" value="254 hits in 1161 CRISPR screens"/>
</dbReference>
<dbReference type="ChiTaRS" id="AURKAIP1">
    <property type="organism name" value="human"/>
</dbReference>
<dbReference type="GenomeRNAi" id="54998"/>
<dbReference type="Pharos" id="Q9NWT8">
    <property type="development level" value="Tchem"/>
</dbReference>
<dbReference type="PRO" id="PR:Q9NWT8"/>
<dbReference type="Proteomes" id="UP000005640">
    <property type="component" value="Chromosome 1"/>
</dbReference>
<dbReference type="RNAct" id="Q9NWT8">
    <property type="molecule type" value="protein"/>
</dbReference>
<dbReference type="Bgee" id="ENSG00000175756">
    <property type="expression patterns" value="Expressed in right testis and 206 other cell types or tissues"/>
</dbReference>
<dbReference type="GO" id="GO:0043231">
    <property type="term" value="C:intracellular membrane-bounded organelle"/>
    <property type="evidence" value="ECO:0000314"/>
    <property type="project" value="HPA"/>
</dbReference>
<dbReference type="GO" id="GO:0005743">
    <property type="term" value="C:mitochondrial inner membrane"/>
    <property type="evidence" value="ECO:0000304"/>
    <property type="project" value="Reactome"/>
</dbReference>
<dbReference type="GO" id="GO:0005759">
    <property type="term" value="C:mitochondrial matrix"/>
    <property type="evidence" value="ECO:0000314"/>
    <property type="project" value="UniProtKB"/>
</dbReference>
<dbReference type="GO" id="GO:0005763">
    <property type="term" value="C:mitochondrial small ribosomal subunit"/>
    <property type="evidence" value="ECO:0000303"/>
    <property type="project" value="ComplexPortal"/>
</dbReference>
<dbReference type="GO" id="GO:0005739">
    <property type="term" value="C:mitochondrion"/>
    <property type="evidence" value="ECO:0000314"/>
    <property type="project" value="HPA"/>
</dbReference>
<dbReference type="GO" id="GO:0005654">
    <property type="term" value="C:nucleoplasm"/>
    <property type="evidence" value="ECO:0000314"/>
    <property type="project" value="HPA"/>
</dbReference>
<dbReference type="GO" id="GO:0005634">
    <property type="term" value="C:nucleus"/>
    <property type="evidence" value="ECO:0000314"/>
    <property type="project" value="UniProtKB"/>
</dbReference>
<dbReference type="GO" id="GO:0032543">
    <property type="term" value="P:mitochondrial translation"/>
    <property type="evidence" value="ECO:0000303"/>
    <property type="project" value="ComplexPortal"/>
</dbReference>
<dbReference type="GO" id="GO:0045839">
    <property type="term" value="P:negative regulation of mitotic nuclear division"/>
    <property type="evidence" value="ECO:0000303"/>
    <property type="project" value="UniProtKB"/>
</dbReference>
<dbReference type="GO" id="GO:0045862">
    <property type="term" value="P:positive regulation of proteolysis"/>
    <property type="evidence" value="ECO:0000314"/>
    <property type="project" value="MGI"/>
</dbReference>
<dbReference type="CDD" id="cd23699">
    <property type="entry name" value="At5g63150_CTD"/>
    <property type="match status" value="1"/>
</dbReference>
<dbReference type="InterPro" id="IPR013177">
    <property type="entry name" value="Ribosomal_mS38_C"/>
</dbReference>
<dbReference type="PANTHER" id="PTHR32035">
    <property type="entry name" value="AURORA KINASE A-INTERACTING PROTEIN"/>
    <property type="match status" value="1"/>
</dbReference>
<dbReference type="PANTHER" id="PTHR32035:SF3">
    <property type="entry name" value="SMALL RIBOSOMAL SUBUNIT PROTEIN MS38"/>
    <property type="match status" value="1"/>
</dbReference>
<dbReference type="Pfam" id="PF08213">
    <property type="entry name" value="COX24_C"/>
    <property type="match status" value="1"/>
</dbReference>
<dbReference type="SMART" id="SM01155">
    <property type="entry name" value="DUF1713"/>
    <property type="match status" value="1"/>
</dbReference>
<evidence type="ECO:0000269" key="1">
    <source>
    </source>
</evidence>
<evidence type="ECO:0000269" key="2">
    <source>
    </source>
</evidence>
<evidence type="ECO:0000269" key="3">
    <source>
    </source>
</evidence>
<evidence type="ECO:0000269" key="4">
    <source>
    </source>
</evidence>
<evidence type="ECO:0000303" key="5">
    <source>
    </source>
</evidence>
<evidence type="ECO:0000305" key="6"/>
<evidence type="ECO:0007829" key="7">
    <source>
        <dbReference type="PDB" id="8CSR"/>
    </source>
</evidence>
<evidence type="ECO:0007829" key="8">
    <source>
        <dbReference type="PDB" id="8CSS"/>
    </source>
</evidence>
<feature type="chain" id="PRO_0000064536" description="Small ribosomal subunit protein mS38">
    <location>
        <begin position="1"/>
        <end position="199"/>
    </location>
</feature>
<feature type="sequence variant" id="VAR_020132" description="In dbSNP:rs3736374.">
    <original>Q</original>
    <variation>H</variation>
    <location>
        <position position="107"/>
    </location>
</feature>
<feature type="helix" evidence="8">
    <location>
        <begin position="130"/>
        <end position="149"/>
    </location>
</feature>
<feature type="helix" evidence="8">
    <location>
        <begin position="151"/>
        <end position="180"/>
    </location>
</feature>
<feature type="strand" evidence="7">
    <location>
        <begin position="183"/>
        <end position="186"/>
    </location>
</feature>
<accession>Q9NWT8</accession>
<accession>Q5TA36</accession>
<accession>Q8TBD3</accession>
<name>AKIP_HUMAN</name>
<keyword id="KW-0002">3D-structure</keyword>
<keyword id="KW-0496">Mitochondrion</keyword>
<keyword id="KW-0539">Nucleus</keyword>
<keyword id="KW-1267">Proteomics identification</keyword>
<keyword id="KW-1185">Reference proteome</keyword>
<keyword id="KW-0687">Ribonucleoprotein</keyword>
<keyword id="KW-0689">Ribosomal protein</keyword>
<comment type="function">
    <text>May act as a negative regulator of Aurora-A kinase, by down-regulation through proteasome-dependent degradation.</text>
</comment>
<comment type="subunit">
    <text evidence="1 2 3">Component of the mitochondrial small ribosomal subunit (mt-SSU). Mature mammalian 55S mitochondrial ribosomes consist of a small (28S) and a large (39S) subunit. The 28S small subunit contains a 12S ribosomal RNA (12S mt-rRNA) and 30 different proteins. The 39S large subunit contains a 16S rRNA (16S mt-rRNA), a copy of mitochondrial valine transfer RNA (mt-tRNA(Val)), which plays an integral structural role, and 52 different proteins (PubMed:23908630, PubMed:25838379). Interacts with Aurora-A (PubMed:12244051).</text>
</comment>
<comment type="interaction">
    <interactant intactId="EBI-448665">
        <id>Q9NWT8</id>
    </interactant>
    <interactant intactId="EBI-7131019">
        <id>Q8TB40</id>
        <label>ABHD4</label>
    </interactant>
    <organismsDiffer>false</organismsDiffer>
    <experiments>3</experiments>
</comment>
<comment type="interaction">
    <interactant intactId="EBI-448665">
        <id>Q9NWT8</id>
    </interactant>
    <interactant intactId="EBI-448680">
        <id>O14965</id>
        <label>AURKA</label>
    </interactant>
    <organismsDiffer>false</organismsDiffer>
    <experiments>2</experiments>
</comment>
<comment type="interaction">
    <interactant intactId="EBI-448665">
        <id>Q9NWT8</id>
    </interactant>
    <interactant intactId="EBI-10305240">
        <id>Q9H1M4</id>
        <label>DEFB127</label>
    </interactant>
    <organismsDiffer>false</organismsDiffer>
    <experiments>3</experiments>
</comment>
<comment type="interaction">
    <interactant intactId="EBI-448665">
        <id>Q9NWT8</id>
    </interactant>
    <interactant intactId="EBI-10175124">
        <id>Q8IZU0</id>
        <label>FAM9B</label>
    </interactant>
    <organismsDiffer>false</organismsDiffer>
    <experiments>3</experiments>
</comment>
<comment type="subcellular location">
    <subcellularLocation>
        <location evidence="2 4">Mitochondrion matrix</location>
    </subcellularLocation>
    <subcellularLocation>
        <location evidence="2">Nucleus</location>
    </subcellularLocation>
</comment>
<comment type="tissue specificity">
    <text>Ubiquitously expressed and especially highly expressed in heart, skeletal muscle and testis.</text>
</comment>
<comment type="similarity">
    <text evidence="6">Belongs to the mitochondrion-specific ribosomal protein mS38 family.</text>
</comment>
<comment type="sequence caution" evidence="6">
    <conflict type="erroneous initiation">
        <sequence resource="EMBL-CDS" id="AAH22808"/>
    </conflict>
</comment>